<comment type="function">
    <text evidence="1">Probable transcription factor involved in flower development.</text>
</comment>
<comment type="subcellular location">
    <subcellularLocation>
        <location evidence="2">Nucleus</location>
    </subcellularLocation>
</comment>
<comment type="alternative products">
    <event type="alternative splicing"/>
    <isoform>
        <id>Q8LLR0-1</id>
        <name>1</name>
        <sequence type="displayed"/>
    </isoform>
    <isoform>
        <id>Q8LLR0-2</id>
        <name>2</name>
        <sequence type="described" ref="VSP_060175 VSP_060176"/>
    </isoform>
</comment>
<comment type="tissue specificity">
    <text evidence="4">Expressed in flowers and seeds.</text>
</comment>
<accession>Q8LLR0</accession>
<accession>F6HGC4</accession>
<proteinExistence type="evidence at transcript level"/>
<name>MADS4_VITVI</name>
<keyword id="KW-0025">Alternative splicing</keyword>
<keyword id="KW-0238">DNA-binding</keyword>
<keyword id="KW-0287">Flowering</keyword>
<keyword id="KW-0539">Nucleus</keyword>
<keyword id="KW-1185">Reference proteome</keyword>
<keyword id="KW-0804">Transcription</keyword>
<keyword id="KW-0805">Transcription regulation</keyword>
<gene>
    <name evidence="7" type="primary">MADS4</name>
    <name evidence="9" type="ordered locus">VIT_01s0010g03900</name>
</gene>
<reference key="1">
    <citation type="journal article" date="2002" name="Plant Sci.">
        <title>Cloning and characterization of grapevine (Vitis vinifera L.) MADS-box genes expressed during inflorescence and berry development.</title>
        <authorList>
            <person name="Boss P.K."/>
            <person name="Sensi E."/>
            <person name="Hua C."/>
            <person name="Davies C."/>
            <person name="Thomas M.R."/>
        </authorList>
    </citation>
    <scope>NUCLEOTIDE SEQUENCE [MRNA] (ISOFORM 1)</scope>
    <scope>TISSUE SPECIFICITY</scope>
    <source>
        <strain>cv. Cabernet Sauvignon</strain>
    </source>
</reference>
<reference key="2">
    <citation type="journal article" date="2007" name="Nature">
        <title>The grapevine genome sequence suggests ancestral hexaploidization in major angiosperm phyla.</title>
        <authorList>
            <person name="Jaillon O."/>
            <person name="Aury J.-M."/>
            <person name="Noel B."/>
            <person name="Policriti A."/>
            <person name="Clepet C."/>
            <person name="Casagrande A."/>
            <person name="Choisne N."/>
            <person name="Aubourg S."/>
            <person name="Vitulo N."/>
            <person name="Jubin C."/>
            <person name="Vezzi A."/>
            <person name="Legeai F."/>
            <person name="Hugueney P."/>
            <person name="Dasilva C."/>
            <person name="Horner D."/>
            <person name="Mica E."/>
            <person name="Jublot D."/>
            <person name="Poulain J."/>
            <person name="Bruyere C."/>
            <person name="Billault A."/>
            <person name="Segurens B."/>
            <person name="Gouyvenoux M."/>
            <person name="Ugarte E."/>
            <person name="Cattonaro F."/>
            <person name="Anthouard V."/>
            <person name="Vico V."/>
            <person name="Del Fabbro C."/>
            <person name="Alaux M."/>
            <person name="Di Gaspero G."/>
            <person name="Dumas V."/>
            <person name="Felice N."/>
            <person name="Paillard S."/>
            <person name="Juman I."/>
            <person name="Moroldo M."/>
            <person name="Scalabrin S."/>
            <person name="Canaguier A."/>
            <person name="Le Clainche I."/>
            <person name="Malacrida G."/>
            <person name="Durand E."/>
            <person name="Pesole G."/>
            <person name="Laucou V."/>
            <person name="Chatelet P."/>
            <person name="Merdinoglu D."/>
            <person name="Delledonne M."/>
            <person name="Pezzotti M."/>
            <person name="Lecharny A."/>
            <person name="Scarpelli C."/>
            <person name="Artiguenave F."/>
            <person name="Pe M.E."/>
            <person name="Valle G."/>
            <person name="Morgante M."/>
            <person name="Caboche M."/>
            <person name="Adam-Blondon A.-F."/>
            <person name="Weissenbach J."/>
            <person name="Quetier F."/>
            <person name="Wincker P."/>
        </authorList>
    </citation>
    <scope>NUCLEOTIDE SEQUENCE [LARGE SCALE GENOMIC DNA]</scope>
    <source>
        <strain>cv. Pinot noir / PN40024</strain>
    </source>
</reference>
<reference key="3">
    <citation type="journal article" date="2009" name="Plant Physiol.">
        <title>Genome-wide analysis of MIKCC-type MADS box genes in grapevine.</title>
        <authorList>
            <person name="Diaz-Riquelme J."/>
            <person name="Lijavetzky D."/>
            <person name="Martinez-Zapater J.M."/>
            <person name="Carmona M.J."/>
        </authorList>
    </citation>
    <scope>GENE FAMILY</scope>
</reference>
<reference key="4">
    <citation type="journal article" date="2016" name="BMC Genomics">
        <title>Structural and functional annotation of the MADS-box transcription factor family in grapevine.</title>
        <authorList>
            <person name="Grimplet J."/>
            <person name="Martinez-Zapater J.M."/>
            <person name="Carmona M.J."/>
        </authorList>
    </citation>
    <scope>GENE FAMILY</scope>
</reference>
<protein>
    <recommendedName>
        <fullName evidence="8">Agamous-like MADS-box protein MADS4</fullName>
    </recommendedName>
    <alternativeName>
        <fullName evidence="7">MADS-box protein 4</fullName>
        <shortName evidence="7">VvMADS4</shortName>
    </alternativeName>
    <alternativeName>
        <fullName evidence="8">SEPALLATA homolog 3</fullName>
        <shortName evidence="5">VvSEP3</shortName>
        <shortName evidence="6">VviSEP3</shortName>
    </alternativeName>
</protein>
<sequence>MGRGRVELKRIENKINRQVTFAKRRNGLLKKAYELSVLCDAEVALIIFSNRGKLYEFCSSSSMLKTLERYQKCNYGAPETNVSTREALELSSQQEYLKLKARYEALQRSQRNLLGEDLGPLSTKELESLERQLDVSLKQIRSTRTQYMLDQLTDLQRKEHMLNEANKTLKQRLLEGTQVNQLQWNPNAQDVGYGRQQAQPQGDGFFHPLECEPTLQIGYQPDPITVAAAGPSVNNYMPGWLP</sequence>
<evidence type="ECO:0000250" key="1">
    <source>
        <dbReference type="UniProtKB" id="Q0HA25"/>
    </source>
</evidence>
<evidence type="ECO:0000255" key="2">
    <source>
        <dbReference type="PROSITE-ProRule" id="PRU00251"/>
    </source>
</evidence>
<evidence type="ECO:0000255" key="3">
    <source>
        <dbReference type="PROSITE-ProRule" id="PRU00629"/>
    </source>
</evidence>
<evidence type="ECO:0000269" key="4">
    <source ref="1"/>
</evidence>
<evidence type="ECO:0000303" key="5">
    <source>
    </source>
</evidence>
<evidence type="ECO:0000303" key="6">
    <source>
    </source>
</evidence>
<evidence type="ECO:0000303" key="7">
    <source ref="1"/>
</evidence>
<evidence type="ECO:0000305" key="8"/>
<evidence type="ECO:0000312" key="9">
    <source>
        <dbReference type="EMBL" id="CBI27678.3"/>
    </source>
</evidence>
<dbReference type="EMBL" id="AF373603">
    <property type="protein sequence ID" value="AAM21344.1"/>
    <property type="molecule type" value="mRNA"/>
</dbReference>
<dbReference type="EMBL" id="FN597015">
    <property type="protein sequence ID" value="CBI27678.3"/>
    <property type="molecule type" value="Genomic_DNA"/>
</dbReference>
<dbReference type="RefSeq" id="NP_001268114.1">
    <property type="nucleotide sequence ID" value="NM_001281185.1"/>
</dbReference>
<dbReference type="SMR" id="Q8LLR0"/>
<dbReference type="FunCoup" id="Q8LLR0">
    <property type="interactions" value="26"/>
</dbReference>
<dbReference type="STRING" id="29760.Q8LLR0"/>
<dbReference type="PaxDb" id="29760-VIT_01s0010g03900.t01"/>
<dbReference type="EnsemblPlants" id="Vitvi01g01677_t001">
    <molecule id="Q8LLR0-1"/>
    <property type="protein sequence ID" value="Vitvi01g01677_P001"/>
    <property type="gene ID" value="Vitvi01g01677"/>
</dbReference>
<dbReference type="GeneID" id="100232869"/>
<dbReference type="Gramene" id="Vitvi01g01677_t001">
    <molecule id="Q8LLR0-1"/>
    <property type="protein sequence ID" value="Vitvi01g01677_P001"/>
    <property type="gene ID" value="Vitvi01g01677"/>
</dbReference>
<dbReference type="KEGG" id="vvi:100232869"/>
<dbReference type="eggNOG" id="KOG0014">
    <property type="taxonomic scope" value="Eukaryota"/>
</dbReference>
<dbReference type="HOGENOM" id="CLU_053053_0_2_1"/>
<dbReference type="InParanoid" id="Q8LLR0"/>
<dbReference type="OMA" id="WEHGEPQ"/>
<dbReference type="OrthoDB" id="1898716at2759"/>
<dbReference type="Proteomes" id="UP000009183">
    <property type="component" value="Chromosome 1"/>
</dbReference>
<dbReference type="ExpressionAtlas" id="Q8LLR0">
    <property type="expression patterns" value="baseline and differential"/>
</dbReference>
<dbReference type="GO" id="GO:0005634">
    <property type="term" value="C:nucleus"/>
    <property type="evidence" value="ECO:0007669"/>
    <property type="project" value="UniProtKB-SubCell"/>
</dbReference>
<dbReference type="GO" id="GO:0000981">
    <property type="term" value="F:DNA-binding transcription factor activity, RNA polymerase II-specific"/>
    <property type="evidence" value="ECO:0000318"/>
    <property type="project" value="GO_Central"/>
</dbReference>
<dbReference type="GO" id="GO:0046983">
    <property type="term" value="F:protein dimerization activity"/>
    <property type="evidence" value="ECO:0007669"/>
    <property type="project" value="InterPro"/>
</dbReference>
<dbReference type="GO" id="GO:0000978">
    <property type="term" value="F:RNA polymerase II cis-regulatory region sequence-specific DNA binding"/>
    <property type="evidence" value="ECO:0000318"/>
    <property type="project" value="GO_Central"/>
</dbReference>
<dbReference type="GO" id="GO:0009908">
    <property type="term" value="P:flower development"/>
    <property type="evidence" value="ECO:0007669"/>
    <property type="project" value="UniProtKB-KW"/>
</dbReference>
<dbReference type="GO" id="GO:0045944">
    <property type="term" value="P:positive regulation of transcription by RNA polymerase II"/>
    <property type="evidence" value="ECO:0007669"/>
    <property type="project" value="InterPro"/>
</dbReference>
<dbReference type="GO" id="GO:0006357">
    <property type="term" value="P:regulation of transcription by RNA polymerase II"/>
    <property type="evidence" value="ECO:0000318"/>
    <property type="project" value="GO_Central"/>
</dbReference>
<dbReference type="CDD" id="cd00265">
    <property type="entry name" value="MADS_MEF2_like"/>
    <property type="match status" value="1"/>
</dbReference>
<dbReference type="FunFam" id="3.40.1810.10:FF:000011">
    <property type="entry name" value="MADS-box transcription factor 7"/>
    <property type="match status" value="1"/>
</dbReference>
<dbReference type="Gene3D" id="3.40.1810.10">
    <property type="entry name" value="Transcription factor, MADS-box"/>
    <property type="match status" value="1"/>
</dbReference>
<dbReference type="InterPro" id="IPR050142">
    <property type="entry name" value="MADS-box/MEF2_TF"/>
</dbReference>
<dbReference type="InterPro" id="IPR033896">
    <property type="entry name" value="MEF2-like_N"/>
</dbReference>
<dbReference type="InterPro" id="IPR002487">
    <property type="entry name" value="TF_Kbox"/>
</dbReference>
<dbReference type="InterPro" id="IPR002100">
    <property type="entry name" value="TF_MADSbox"/>
</dbReference>
<dbReference type="InterPro" id="IPR036879">
    <property type="entry name" value="TF_MADSbox_sf"/>
</dbReference>
<dbReference type="PANTHER" id="PTHR48019">
    <property type="entry name" value="SERUM RESPONSE FACTOR HOMOLOG"/>
    <property type="match status" value="1"/>
</dbReference>
<dbReference type="Pfam" id="PF01486">
    <property type="entry name" value="K-box"/>
    <property type="match status" value="1"/>
</dbReference>
<dbReference type="Pfam" id="PF00319">
    <property type="entry name" value="SRF-TF"/>
    <property type="match status" value="1"/>
</dbReference>
<dbReference type="PRINTS" id="PR00404">
    <property type="entry name" value="MADSDOMAIN"/>
</dbReference>
<dbReference type="SMART" id="SM00432">
    <property type="entry name" value="MADS"/>
    <property type="match status" value="1"/>
</dbReference>
<dbReference type="SUPFAM" id="SSF55455">
    <property type="entry name" value="SRF-like"/>
    <property type="match status" value="1"/>
</dbReference>
<dbReference type="PROSITE" id="PS51297">
    <property type="entry name" value="K_BOX"/>
    <property type="match status" value="1"/>
</dbReference>
<dbReference type="PROSITE" id="PS00350">
    <property type="entry name" value="MADS_BOX_1"/>
    <property type="match status" value="1"/>
</dbReference>
<dbReference type="PROSITE" id="PS50066">
    <property type="entry name" value="MADS_BOX_2"/>
    <property type="match status" value="1"/>
</dbReference>
<feature type="chain" id="PRO_0000447292" description="Agamous-like MADS-box protein MADS4">
    <location>
        <begin position="1"/>
        <end position="242"/>
    </location>
</feature>
<feature type="domain" description="MADS-box" evidence="2">
    <location>
        <begin position="1"/>
        <end position="61"/>
    </location>
</feature>
<feature type="domain" description="K-box" evidence="3">
    <location>
        <begin position="89"/>
        <end position="185"/>
    </location>
</feature>
<feature type="splice variant" id="VSP_060175" description="In isoform 2.">
    <original>YQP</original>
    <variation>PIQ</variation>
    <location>
        <begin position="219"/>
        <end position="221"/>
    </location>
</feature>
<feature type="splice variant" id="VSP_060176" description="In isoform 2.">
    <location>
        <begin position="222"/>
        <end position="242"/>
    </location>
</feature>
<feature type="sequence conflict" description="In Ref. 1; AAM21344." ref="1">
    <original>R</original>
    <variation>L</variation>
    <location>
        <position position="108"/>
    </location>
</feature>
<organism>
    <name type="scientific">Vitis vinifera</name>
    <name type="common">Grape</name>
    <dbReference type="NCBI Taxonomy" id="29760"/>
    <lineage>
        <taxon>Eukaryota</taxon>
        <taxon>Viridiplantae</taxon>
        <taxon>Streptophyta</taxon>
        <taxon>Embryophyta</taxon>
        <taxon>Tracheophyta</taxon>
        <taxon>Spermatophyta</taxon>
        <taxon>Magnoliopsida</taxon>
        <taxon>eudicotyledons</taxon>
        <taxon>Gunneridae</taxon>
        <taxon>Pentapetalae</taxon>
        <taxon>rosids</taxon>
        <taxon>Vitales</taxon>
        <taxon>Vitaceae</taxon>
        <taxon>Viteae</taxon>
        <taxon>Vitis</taxon>
    </lineage>
</organism>